<dbReference type="EMBL" id="AY653733">
    <property type="protein sequence ID" value="AAV51109.1"/>
    <property type="molecule type" value="Genomic_DNA"/>
</dbReference>
<dbReference type="KEGG" id="vg:9925513"/>
<dbReference type="OrthoDB" id="19622at10239"/>
<dbReference type="Proteomes" id="UP000001134">
    <property type="component" value="Genome"/>
</dbReference>
<dbReference type="GO" id="GO:0044423">
    <property type="term" value="C:virion component"/>
    <property type="evidence" value="ECO:0007669"/>
    <property type="project" value="UniProtKB-KW"/>
</dbReference>
<dbReference type="InterPro" id="IPR043930">
    <property type="entry name" value="DUF5754"/>
</dbReference>
<dbReference type="Pfam" id="PF19058">
    <property type="entry name" value="DUF5754"/>
    <property type="match status" value="1"/>
</dbReference>
<reference key="1">
    <citation type="journal article" date="2004" name="Science">
        <title>The 1.2-megabase genome sequence of Mimivirus.</title>
        <authorList>
            <person name="Raoult D."/>
            <person name="Audic S."/>
            <person name="Robert C."/>
            <person name="Abergel C."/>
            <person name="Renesto P."/>
            <person name="Ogata H."/>
            <person name="La Scola B."/>
            <person name="Susan M."/>
            <person name="Claverie J.-M."/>
        </authorList>
    </citation>
    <scope>NUCLEOTIDE SEQUENCE [LARGE SCALE GENOMIC DNA]</scope>
    <source>
        <strain>Rowbotham-Bradford</strain>
    </source>
</reference>
<reference key="2">
    <citation type="journal article" date="2006" name="J. Virol.">
        <title>Mimivirus giant particles incorporate a large fraction of anonymous and unique gene products.</title>
        <authorList>
            <person name="Renesto P."/>
            <person name="Abergel C."/>
            <person name="Decloquement P."/>
            <person name="Moinier D."/>
            <person name="Azza S."/>
            <person name="Ogata H."/>
            <person name="Fourquet P."/>
            <person name="Gorvel J.-P."/>
            <person name="Claverie J.-M."/>
            <person name="Raoult D."/>
        </authorList>
    </citation>
    <scope>IDENTIFICATION BY MASS SPECTROMETRY [LARGE SCALE ANALYSIS]</scope>
    <scope>SUBCELLULAR LOCATION</scope>
</reference>
<feature type="chain" id="PRO_0000071373" description="Uncharacterized protein L851">
    <location>
        <begin position="1"/>
        <end position="100"/>
    </location>
</feature>
<evidence type="ECO:0000269" key="1">
    <source>
    </source>
</evidence>
<sequence>MNSYIREKVDEYRERYDLPDLKVTRSDKEGKRLKAVYTDKDGHRKKIYFGQEGAYTYADGAPDYVRNAYHARASGQYTKKGKQAISIPGSAASLSYNILW</sequence>
<name>YL851_MIMIV</name>
<accession>Q5UP30</accession>
<keyword id="KW-1185">Reference proteome</keyword>
<keyword id="KW-0946">Virion</keyword>
<gene>
    <name type="ordered locus">MIMI_L851</name>
</gene>
<organism>
    <name type="scientific">Acanthamoeba polyphaga mimivirus</name>
    <name type="common">APMV</name>
    <dbReference type="NCBI Taxonomy" id="212035"/>
    <lineage>
        <taxon>Viruses</taxon>
        <taxon>Varidnaviria</taxon>
        <taxon>Bamfordvirae</taxon>
        <taxon>Nucleocytoviricota</taxon>
        <taxon>Megaviricetes</taxon>
        <taxon>Imitervirales</taxon>
        <taxon>Mimiviridae</taxon>
        <taxon>Megamimivirinae</taxon>
        <taxon>Mimivirus</taxon>
        <taxon>Mimivirus bradfordmassiliense</taxon>
    </lineage>
</organism>
<proteinExistence type="evidence at protein level"/>
<protein>
    <recommendedName>
        <fullName>Uncharacterized protein L851</fullName>
    </recommendedName>
</protein>
<organismHost>
    <name type="scientific">Acanthamoeba polyphaga</name>
    <name type="common">Amoeba</name>
    <dbReference type="NCBI Taxonomy" id="5757"/>
</organismHost>
<comment type="subcellular location">
    <subcellularLocation>
        <location evidence="1">Virion</location>
    </subcellularLocation>
</comment>